<comment type="function">
    <text evidence="1">Potential calcium sensor.</text>
</comment>
<comment type="caution">
    <text evidence="4">Although assigned as a calmodulin family member by Ref.4, it only contains EF-hand domains.</text>
</comment>
<feature type="chain" id="PRO_0000342953" description="Probable calcium-binding protein CML25">
    <location>
        <begin position="1"/>
        <end position="186"/>
    </location>
</feature>
<feature type="domain" description="EF-hand 1" evidence="2">
    <location>
        <begin position="33"/>
        <end position="68"/>
    </location>
</feature>
<feature type="domain" description="EF-hand 2" evidence="2">
    <location>
        <begin position="69"/>
        <end position="104"/>
    </location>
</feature>
<feature type="domain" description="EF-hand 3" evidence="2">
    <location>
        <begin position="106"/>
        <end position="141"/>
    </location>
</feature>
<feature type="domain" description="EF-hand 4" evidence="2">
    <location>
        <begin position="142"/>
        <end position="177"/>
    </location>
</feature>
<feature type="region of interest" description="Disordered" evidence="3">
    <location>
        <begin position="1"/>
        <end position="23"/>
    </location>
</feature>
<feature type="compositionally biased region" description="Low complexity" evidence="3">
    <location>
        <begin position="1"/>
        <end position="17"/>
    </location>
</feature>
<feature type="binding site" evidence="2">
    <location>
        <position position="46"/>
    </location>
    <ligand>
        <name>Ca(2+)</name>
        <dbReference type="ChEBI" id="CHEBI:29108"/>
        <label>1</label>
    </ligand>
</feature>
<feature type="binding site" evidence="2">
    <location>
        <position position="48"/>
    </location>
    <ligand>
        <name>Ca(2+)</name>
        <dbReference type="ChEBI" id="CHEBI:29108"/>
        <label>1</label>
    </ligand>
</feature>
<feature type="binding site" evidence="2">
    <location>
        <position position="50"/>
    </location>
    <ligand>
        <name>Ca(2+)</name>
        <dbReference type="ChEBI" id="CHEBI:29108"/>
        <label>1</label>
    </ligand>
</feature>
<feature type="binding site" evidence="2">
    <location>
        <position position="52"/>
    </location>
    <ligand>
        <name>Ca(2+)</name>
        <dbReference type="ChEBI" id="CHEBI:29108"/>
        <label>1</label>
    </ligand>
</feature>
<feature type="binding site" evidence="2">
    <location>
        <position position="57"/>
    </location>
    <ligand>
        <name>Ca(2+)</name>
        <dbReference type="ChEBI" id="CHEBI:29108"/>
        <label>1</label>
    </ligand>
</feature>
<feature type="binding site" evidence="2">
    <location>
        <position position="119"/>
    </location>
    <ligand>
        <name>Ca(2+)</name>
        <dbReference type="ChEBI" id="CHEBI:29108"/>
        <label>2</label>
    </ligand>
</feature>
<feature type="binding site" evidence="2">
    <location>
        <position position="121"/>
    </location>
    <ligand>
        <name>Ca(2+)</name>
        <dbReference type="ChEBI" id="CHEBI:29108"/>
        <label>2</label>
    </ligand>
</feature>
<feature type="binding site" evidence="2">
    <location>
        <position position="123"/>
    </location>
    <ligand>
        <name>Ca(2+)</name>
        <dbReference type="ChEBI" id="CHEBI:29108"/>
        <label>2</label>
    </ligand>
</feature>
<feature type="binding site" evidence="2">
    <location>
        <position position="125"/>
    </location>
    <ligand>
        <name>Ca(2+)</name>
        <dbReference type="ChEBI" id="CHEBI:29108"/>
        <label>2</label>
    </ligand>
</feature>
<feature type="binding site" evidence="2">
    <location>
        <position position="130"/>
    </location>
    <ligand>
        <name>Ca(2+)</name>
        <dbReference type="ChEBI" id="CHEBI:29108"/>
        <label>2</label>
    </ligand>
</feature>
<feature type="binding site" evidence="2">
    <location>
        <position position="155"/>
    </location>
    <ligand>
        <name>Ca(2+)</name>
        <dbReference type="ChEBI" id="CHEBI:29108"/>
        <label>3</label>
    </ligand>
</feature>
<feature type="binding site" evidence="2">
    <location>
        <position position="157"/>
    </location>
    <ligand>
        <name>Ca(2+)</name>
        <dbReference type="ChEBI" id="CHEBI:29108"/>
        <label>3</label>
    </ligand>
</feature>
<feature type="binding site" evidence="2">
    <location>
        <position position="159"/>
    </location>
    <ligand>
        <name>Ca(2+)</name>
        <dbReference type="ChEBI" id="CHEBI:29108"/>
        <label>3</label>
    </ligand>
</feature>
<feature type="binding site" evidence="2">
    <location>
        <position position="161"/>
    </location>
    <ligand>
        <name>Ca(2+)</name>
        <dbReference type="ChEBI" id="CHEBI:29108"/>
        <label>3</label>
    </ligand>
</feature>
<feature type="binding site" evidence="2">
    <location>
        <position position="166"/>
    </location>
    <ligand>
        <name>Ca(2+)</name>
        <dbReference type="ChEBI" id="CHEBI:29108"/>
        <label>3</label>
    </ligand>
</feature>
<proteinExistence type="evidence at transcript level"/>
<dbReference type="EMBL" id="AC000103">
    <property type="protein sequence ID" value="AAF97973.1"/>
    <property type="molecule type" value="Genomic_DNA"/>
</dbReference>
<dbReference type="EMBL" id="CP002684">
    <property type="protein sequence ID" value="AEE30554.1"/>
    <property type="molecule type" value="Genomic_DNA"/>
</dbReference>
<dbReference type="EMBL" id="DQ446288">
    <property type="protein sequence ID" value="ABE65653.1"/>
    <property type="molecule type" value="mRNA"/>
</dbReference>
<dbReference type="PIR" id="F86379">
    <property type="entry name" value="F86379"/>
</dbReference>
<dbReference type="RefSeq" id="NP_173866.1">
    <property type="nucleotide sequence ID" value="NM_102304.3"/>
</dbReference>
<dbReference type="SMR" id="Q9FYK2"/>
<dbReference type="FunCoup" id="Q9FYK2">
    <property type="interactions" value="248"/>
</dbReference>
<dbReference type="STRING" id="3702.Q9FYK2"/>
<dbReference type="PaxDb" id="3702-AT1G24620.1"/>
<dbReference type="ProteomicsDB" id="240999"/>
<dbReference type="EnsemblPlants" id="AT1G24620.1">
    <property type="protein sequence ID" value="AT1G24620.1"/>
    <property type="gene ID" value="AT1G24620"/>
</dbReference>
<dbReference type="GeneID" id="839076"/>
<dbReference type="Gramene" id="AT1G24620.1">
    <property type="protein sequence ID" value="AT1G24620.1"/>
    <property type="gene ID" value="AT1G24620"/>
</dbReference>
<dbReference type="KEGG" id="ath:AT1G24620"/>
<dbReference type="Araport" id="AT1G24620"/>
<dbReference type="TAIR" id="AT1G24620">
    <property type="gene designation" value="CML25"/>
</dbReference>
<dbReference type="eggNOG" id="KOG0027">
    <property type="taxonomic scope" value="Eukaryota"/>
</dbReference>
<dbReference type="HOGENOM" id="CLU_061288_20_4_1"/>
<dbReference type="InParanoid" id="Q9FYK2"/>
<dbReference type="OMA" id="NTTHEHE"/>
<dbReference type="PhylomeDB" id="Q9FYK2"/>
<dbReference type="PRO" id="PR:Q9FYK2"/>
<dbReference type="Proteomes" id="UP000006548">
    <property type="component" value="Chromosome 1"/>
</dbReference>
<dbReference type="ExpressionAtlas" id="Q9FYK2">
    <property type="expression patterns" value="baseline and differential"/>
</dbReference>
<dbReference type="GO" id="GO:0005737">
    <property type="term" value="C:cytoplasm"/>
    <property type="evidence" value="ECO:0000314"/>
    <property type="project" value="TAIR"/>
</dbReference>
<dbReference type="GO" id="GO:0005634">
    <property type="term" value="C:nucleus"/>
    <property type="evidence" value="ECO:0007005"/>
    <property type="project" value="TAIR"/>
</dbReference>
<dbReference type="GO" id="GO:0005509">
    <property type="term" value="F:calcium ion binding"/>
    <property type="evidence" value="ECO:0007669"/>
    <property type="project" value="InterPro"/>
</dbReference>
<dbReference type="GO" id="GO:0048767">
    <property type="term" value="P:root hair elongation"/>
    <property type="evidence" value="ECO:0000315"/>
    <property type="project" value="TAIR"/>
</dbReference>
<dbReference type="CDD" id="cd00051">
    <property type="entry name" value="EFh"/>
    <property type="match status" value="1"/>
</dbReference>
<dbReference type="FunFam" id="1.10.238.10:FF:000089">
    <property type="entry name" value="calmodulin-like protein 3"/>
    <property type="match status" value="1"/>
</dbReference>
<dbReference type="FunFam" id="1.10.238.10:FF:000663">
    <property type="entry name" value="Probable calcium-binding protein CML25"/>
    <property type="match status" value="1"/>
</dbReference>
<dbReference type="Gene3D" id="1.10.238.10">
    <property type="entry name" value="EF-hand"/>
    <property type="match status" value="2"/>
</dbReference>
<dbReference type="InterPro" id="IPR011992">
    <property type="entry name" value="EF-hand-dom_pair"/>
</dbReference>
<dbReference type="InterPro" id="IPR018247">
    <property type="entry name" value="EF_Hand_1_Ca_BS"/>
</dbReference>
<dbReference type="InterPro" id="IPR002048">
    <property type="entry name" value="EF_hand_dom"/>
</dbReference>
<dbReference type="InterPro" id="IPR039647">
    <property type="entry name" value="EF_hand_pair_protein_CML-like"/>
</dbReference>
<dbReference type="PANTHER" id="PTHR10891">
    <property type="entry name" value="EF-HAND CALCIUM-BINDING DOMAIN CONTAINING PROTEIN"/>
    <property type="match status" value="1"/>
</dbReference>
<dbReference type="Pfam" id="PF13499">
    <property type="entry name" value="EF-hand_7"/>
    <property type="match status" value="2"/>
</dbReference>
<dbReference type="SMART" id="SM00054">
    <property type="entry name" value="EFh"/>
    <property type="match status" value="4"/>
</dbReference>
<dbReference type="SUPFAM" id="SSF47473">
    <property type="entry name" value="EF-hand"/>
    <property type="match status" value="1"/>
</dbReference>
<dbReference type="PROSITE" id="PS00018">
    <property type="entry name" value="EF_HAND_1"/>
    <property type="match status" value="3"/>
</dbReference>
<dbReference type="PROSITE" id="PS50222">
    <property type="entry name" value="EF_HAND_2"/>
    <property type="match status" value="4"/>
</dbReference>
<organism>
    <name type="scientific">Arabidopsis thaliana</name>
    <name type="common">Mouse-ear cress</name>
    <dbReference type="NCBI Taxonomy" id="3702"/>
    <lineage>
        <taxon>Eukaryota</taxon>
        <taxon>Viridiplantae</taxon>
        <taxon>Streptophyta</taxon>
        <taxon>Embryophyta</taxon>
        <taxon>Tracheophyta</taxon>
        <taxon>Spermatophyta</taxon>
        <taxon>Magnoliopsida</taxon>
        <taxon>eudicotyledons</taxon>
        <taxon>Gunneridae</taxon>
        <taxon>Pentapetalae</taxon>
        <taxon>rosids</taxon>
        <taxon>malvids</taxon>
        <taxon>Brassicales</taxon>
        <taxon>Brassicaceae</taxon>
        <taxon>Camelineae</taxon>
        <taxon>Arabidopsis</taxon>
    </lineage>
</organism>
<name>CML25_ARATH</name>
<accession>Q9FYK2</accession>
<protein>
    <recommendedName>
        <fullName>Probable calcium-binding protein CML25</fullName>
    </recommendedName>
    <alternativeName>
        <fullName>Calmodulin-like protein 25</fullName>
    </alternativeName>
</protein>
<reference key="1">
    <citation type="journal article" date="2000" name="Nature">
        <title>Sequence and analysis of chromosome 1 of the plant Arabidopsis thaliana.</title>
        <authorList>
            <person name="Theologis A."/>
            <person name="Ecker J.R."/>
            <person name="Palm C.J."/>
            <person name="Federspiel N.A."/>
            <person name="Kaul S."/>
            <person name="White O."/>
            <person name="Alonso J."/>
            <person name="Altafi H."/>
            <person name="Araujo R."/>
            <person name="Bowman C.L."/>
            <person name="Brooks S.Y."/>
            <person name="Buehler E."/>
            <person name="Chan A."/>
            <person name="Chao Q."/>
            <person name="Chen H."/>
            <person name="Cheuk R.F."/>
            <person name="Chin C.W."/>
            <person name="Chung M.K."/>
            <person name="Conn L."/>
            <person name="Conway A.B."/>
            <person name="Conway A.R."/>
            <person name="Creasy T.H."/>
            <person name="Dewar K."/>
            <person name="Dunn P."/>
            <person name="Etgu P."/>
            <person name="Feldblyum T.V."/>
            <person name="Feng J.-D."/>
            <person name="Fong B."/>
            <person name="Fujii C.Y."/>
            <person name="Gill J.E."/>
            <person name="Goldsmith A.D."/>
            <person name="Haas B."/>
            <person name="Hansen N.F."/>
            <person name="Hughes B."/>
            <person name="Huizar L."/>
            <person name="Hunter J.L."/>
            <person name="Jenkins J."/>
            <person name="Johnson-Hopson C."/>
            <person name="Khan S."/>
            <person name="Khaykin E."/>
            <person name="Kim C.J."/>
            <person name="Koo H.L."/>
            <person name="Kremenetskaia I."/>
            <person name="Kurtz D.B."/>
            <person name="Kwan A."/>
            <person name="Lam B."/>
            <person name="Langin-Hooper S."/>
            <person name="Lee A."/>
            <person name="Lee J.M."/>
            <person name="Lenz C.A."/>
            <person name="Li J.H."/>
            <person name="Li Y.-P."/>
            <person name="Lin X."/>
            <person name="Liu S.X."/>
            <person name="Liu Z.A."/>
            <person name="Luros J.S."/>
            <person name="Maiti R."/>
            <person name="Marziali A."/>
            <person name="Militscher J."/>
            <person name="Miranda M."/>
            <person name="Nguyen M."/>
            <person name="Nierman W.C."/>
            <person name="Osborne B.I."/>
            <person name="Pai G."/>
            <person name="Peterson J."/>
            <person name="Pham P.K."/>
            <person name="Rizzo M."/>
            <person name="Rooney T."/>
            <person name="Rowley D."/>
            <person name="Sakano H."/>
            <person name="Salzberg S.L."/>
            <person name="Schwartz J.R."/>
            <person name="Shinn P."/>
            <person name="Southwick A.M."/>
            <person name="Sun H."/>
            <person name="Tallon L.J."/>
            <person name="Tambunga G."/>
            <person name="Toriumi M.J."/>
            <person name="Town C.D."/>
            <person name="Utterback T."/>
            <person name="Van Aken S."/>
            <person name="Vaysberg M."/>
            <person name="Vysotskaia V.S."/>
            <person name="Walker M."/>
            <person name="Wu D."/>
            <person name="Yu G."/>
            <person name="Fraser C.M."/>
            <person name="Venter J.C."/>
            <person name="Davis R.W."/>
        </authorList>
    </citation>
    <scope>NUCLEOTIDE SEQUENCE [LARGE SCALE GENOMIC DNA]</scope>
    <source>
        <strain>cv. Columbia</strain>
    </source>
</reference>
<reference key="2">
    <citation type="journal article" date="2017" name="Plant J.">
        <title>Araport11: a complete reannotation of the Arabidopsis thaliana reference genome.</title>
        <authorList>
            <person name="Cheng C.Y."/>
            <person name="Krishnakumar V."/>
            <person name="Chan A.P."/>
            <person name="Thibaud-Nissen F."/>
            <person name="Schobel S."/>
            <person name="Town C.D."/>
        </authorList>
    </citation>
    <scope>GENOME REANNOTATION</scope>
    <source>
        <strain>cv. Columbia</strain>
    </source>
</reference>
<reference key="3">
    <citation type="journal article" date="2006" name="Plant Biotechnol. J.">
        <title>Simultaneous high-throughput recombinational cloning of open reading frames in closed and open configurations.</title>
        <authorList>
            <person name="Underwood B.A."/>
            <person name="Vanderhaeghen R."/>
            <person name="Whitford R."/>
            <person name="Town C.D."/>
            <person name="Hilson P."/>
        </authorList>
    </citation>
    <scope>NUCLEOTIDE SEQUENCE [LARGE SCALE MRNA]</scope>
    <source>
        <strain>cv. Columbia</strain>
    </source>
</reference>
<reference key="4">
    <citation type="journal article" date="2003" name="New Phytol.">
        <title>Calmodulins and related potential calcium sensors of Arabidopsis.</title>
        <authorList>
            <person name="McCormack E."/>
            <person name="Braam J."/>
        </authorList>
    </citation>
    <scope>GENE FAMILY</scope>
    <scope>NOMENCLATURE</scope>
</reference>
<evidence type="ECO:0000250" key="1"/>
<evidence type="ECO:0000255" key="2">
    <source>
        <dbReference type="PROSITE-ProRule" id="PRU00448"/>
    </source>
</evidence>
<evidence type="ECO:0000256" key="3">
    <source>
        <dbReference type="SAM" id="MobiDB-lite"/>
    </source>
</evidence>
<evidence type="ECO:0000305" key="4"/>
<gene>
    <name type="primary">CML25</name>
    <name type="ordered locus">At1g24620</name>
    <name type="ORF">F21J9.28</name>
</gene>
<sequence length="186" mass="20301">MFNKNQGSNGGSSSNVGIGADSPYLQKARSGKTEIRELEAVFKKFDVNGDGKISSKELGAIMTSLGHEVPEEELEKAITEIDRKGDGYINFEEFVELNTKGMDQNDVLENLKDAFSVYDIDGNGSISAEELHEVLRSLGDECSIAECRKMIGGVDKDGDGTIDFEEFKIMMTMGSRRDNVMGGGPR</sequence>
<keyword id="KW-0106">Calcium</keyword>
<keyword id="KW-0479">Metal-binding</keyword>
<keyword id="KW-1185">Reference proteome</keyword>
<keyword id="KW-0677">Repeat</keyword>